<accession>A0A8J8</accession>
<comment type="function">
    <text evidence="2">Binds to TEK/TIE2, competing for the ANGPT1 binding site, and modulating ANGPT1 signaling (By similarity). Can induce tyrosine phosphorylation of TEK/TIE2 in the absence of ANGPT1 (By similarity). In the absence of angiogenic inducers, such as VEGF, ANGPT2-mediated loosening of cell-matrix contacts may induce endothelial cell apoptosis with consequent vascular regression (By similarity). In concert with VEGF, it may facilitate endothelial cell migration and proliferation, thus serving as a permissive angiogenic signal (By similarity). Involved in the regulation of lymphangiogenesis (By similarity).</text>
</comment>
<comment type="subunit">
    <text evidence="2 3">Interacts with TEK/TIE2, competing for the same binding site as ANGPT1 (By similarity). Interacts with ITGA5 (By similarity). Interacts with SVEP1/polydom (By similarity). Interacts with THBD; this interaction significantly inhibits the generation of activated PC and TAFIa/CPB2 by the thrombin/thrombomodulin complex (By similarity).</text>
</comment>
<comment type="subcellular location">
    <subcellularLocation>
        <location evidence="2">Secreted</location>
    </subcellularLocation>
</comment>
<comment type="domain">
    <text evidence="1">The Fibrinogen C-terminal domain mediates interaction with the TEK/TIE2 receptor.</text>
</comment>
<organism>
    <name type="scientific">Canis lupus familiaris</name>
    <name type="common">Dog</name>
    <name type="synonym">Canis familiaris</name>
    <dbReference type="NCBI Taxonomy" id="9615"/>
    <lineage>
        <taxon>Eukaryota</taxon>
        <taxon>Metazoa</taxon>
        <taxon>Chordata</taxon>
        <taxon>Craniata</taxon>
        <taxon>Vertebrata</taxon>
        <taxon>Euteleostomi</taxon>
        <taxon>Mammalia</taxon>
        <taxon>Eutheria</taxon>
        <taxon>Laurasiatheria</taxon>
        <taxon>Carnivora</taxon>
        <taxon>Caniformia</taxon>
        <taxon>Canidae</taxon>
        <taxon>Canis</taxon>
    </lineage>
</organism>
<evidence type="ECO:0000250" key="1"/>
<evidence type="ECO:0000250" key="2">
    <source>
        <dbReference type="UniProtKB" id="O15123"/>
    </source>
</evidence>
<evidence type="ECO:0000250" key="3">
    <source>
        <dbReference type="UniProtKB" id="O35608"/>
    </source>
</evidence>
<evidence type="ECO:0000255" key="4"/>
<evidence type="ECO:0000255" key="5">
    <source>
        <dbReference type="PROSITE-ProRule" id="PRU00739"/>
    </source>
</evidence>
<protein>
    <recommendedName>
        <fullName>Angiopoietin-2</fullName>
        <shortName>ANG-2</shortName>
    </recommendedName>
</protein>
<keyword id="KW-0037">Angiogenesis</keyword>
<keyword id="KW-0106">Calcium</keyword>
<keyword id="KW-0175">Coiled coil</keyword>
<keyword id="KW-0217">Developmental protein</keyword>
<keyword id="KW-0221">Differentiation</keyword>
<keyword id="KW-1015">Disulfide bond</keyword>
<keyword id="KW-0325">Glycoprotein</keyword>
<keyword id="KW-0479">Metal-binding</keyword>
<keyword id="KW-1185">Reference proteome</keyword>
<keyword id="KW-0964">Secreted</keyword>
<keyword id="KW-0732">Signal</keyword>
<proteinExistence type="evidence at transcript level"/>
<sequence>MWQIVFFTLSCDLVRAAAYNNFRRSMDSIGRRQYQVQHGSCSYTFLLPETDNCRSPGSYVPNAVQRDAPLDYDDSVQRLQVLENIMENNTQWLIKLENYIQDNMKKEMVEMQQNAVQNQTAVMIEIGTNLLNQTAEQTRKLTDVEAQVLNQTTRLELQLLEHSLSTNKLEKQILDQTSEINKLQDKNSFLEKKVLDMEDKHIVQLRSIKEEKDQLQVLVSKQNSIIEELEKQLVTATVNNSVLQKQQHDLMETVHSLLTMISPSKSPKDTFVAKEEQIIYRDCAEVFKSGLTTNGIYTLTFPNSTEEIKAYCDMETSGGGWTVIQRREDGSVDFQRTWKEYKVGFGNPSGEHWLGNEFVFQVTNQQPYVLKIHLKDWEGNEAYSLYEHFYLSGEELNYRIHLKGLTGTAGKISSISQPGNDFSTKDADNDKCICKCSQMLTGGWWFDACGPSNLNGMYYPQRQNTNKFNGIKWYYWKGSGYSLKGTTMMIRPADF</sequence>
<feature type="signal peptide" evidence="4">
    <location>
        <begin position="1"/>
        <end position="18"/>
    </location>
</feature>
<feature type="chain" id="PRO_0000278835" description="Angiopoietin-2">
    <location>
        <begin position="19"/>
        <end position="495"/>
    </location>
</feature>
<feature type="domain" description="Fibrinogen C-terminal" evidence="5">
    <location>
        <begin position="274"/>
        <end position="494"/>
    </location>
</feature>
<feature type="coiled-coil region" evidence="4">
    <location>
        <begin position="165"/>
        <end position="247"/>
    </location>
</feature>
<feature type="binding site" evidence="2">
    <location>
        <position position="428"/>
    </location>
    <ligand>
        <name>Ca(2+)</name>
        <dbReference type="ChEBI" id="CHEBI:29108"/>
    </ligand>
</feature>
<feature type="binding site" evidence="2">
    <location>
        <position position="430"/>
    </location>
    <ligand>
        <name>Ca(2+)</name>
        <dbReference type="ChEBI" id="CHEBI:29108"/>
    </ligand>
</feature>
<feature type="binding site" evidence="2">
    <location>
        <position position="432"/>
    </location>
    <ligand>
        <name>Ca(2+)</name>
        <dbReference type="ChEBI" id="CHEBI:29108"/>
    </ligand>
</feature>
<feature type="binding site" evidence="2">
    <location>
        <position position="434"/>
    </location>
    <ligand>
        <name>Ca(2+)</name>
        <dbReference type="ChEBI" id="CHEBI:29108"/>
    </ligand>
</feature>
<feature type="glycosylation site" description="N-linked (GlcNAc...) asparagine" evidence="4">
    <location>
        <position position="88"/>
    </location>
</feature>
<feature type="glycosylation site" description="N-linked (GlcNAc...) asparagine" evidence="4">
    <location>
        <position position="118"/>
    </location>
</feature>
<feature type="glycosylation site" description="N-linked (GlcNAc...) asparagine" evidence="4">
    <location>
        <position position="132"/>
    </location>
</feature>
<feature type="glycosylation site" description="N-linked (GlcNAc...) asparagine" evidence="4">
    <location>
        <position position="150"/>
    </location>
</feature>
<feature type="glycosylation site" description="N-linked (GlcNAc...) asparagine" evidence="4">
    <location>
        <position position="239"/>
    </location>
</feature>
<feature type="glycosylation site" description="N-linked (GlcNAc...) asparagine" evidence="4">
    <location>
        <position position="303"/>
    </location>
</feature>
<feature type="disulfide bond" evidence="5">
    <location>
        <begin position="283"/>
        <end position="312"/>
    </location>
</feature>
<feature type="disulfide bond" evidence="5">
    <location>
        <begin position="432"/>
        <end position="434"/>
    </location>
</feature>
<feature type="disulfide bond" evidence="5">
    <location>
        <begin position="436"/>
        <end position="449"/>
    </location>
</feature>
<reference key="1">
    <citation type="journal article" date="2006" name="Res. Vet. Sci.">
        <title>Gene expressions of canine angiopoietin-1 and -2 in normal tissues and spontaneous tumours.</title>
        <authorList>
            <person name="Kato Y."/>
            <person name="Asano K."/>
            <person name="Mizutani I."/>
            <person name="Konno T."/>
            <person name="Sasaki Y."/>
            <person name="Kutara K."/>
            <person name="Teshima K."/>
            <person name="Edamura K."/>
            <person name="Kano R."/>
            <person name="Suzuki K."/>
            <person name="Shibuya H."/>
            <person name="Sato T."/>
            <person name="Hasegawa A."/>
            <person name="Tanaka S."/>
        </authorList>
    </citation>
    <scope>NUCLEOTIDE SEQUENCE [MRNA]</scope>
</reference>
<dbReference type="EMBL" id="AB256019">
    <property type="protein sequence ID" value="BAE93229.1"/>
    <property type="molecule type" value="mRNA"/>
</dbReference>
<dbReference type="RefSeq" id="NP_001041591.1">
    <property type="nucleotide sequence ID" value="NM_001048126.1"/>
</dbReference>
<dbReference type="SMR" id="A0A8J8"/>
<dbReference type="FunCoup" id="A0A8J8">
    <property type="interactions" value="222"/>
</dbReference>
<dbReference type="STRING" id="9615.ENSCAFP00000012670"/>
<dbReference type="GlyCosmos" id="A0A8J8">
    <property type="glycosylation" value="6 sites, No reported glycans"/>
</dbReference>
<dbReference type="PaxDb" id="9612-ENSCAFP00000012670"/>
<dbReference type="Ensembl" id="ENSCAFT00000013697.5">
    <property type="protein sequence ID" value="ENSCAFP00000012670.3"/>
    <property type="gene ID" value="ENSCAFG00000008597.5"/>
</dbReference>
<dbReference type="Ensembl" id="ENSCAFT00030016221.1">
    <property type="protein sequence ID" value="ENSCAFP00030014161.1"/>
    <property type="gene ID" value="ENSCAFG00030008722.1"/>
</dbReference>
<dbReference type="Ensembl" id="ENSCAFT00040015200.1">
    <property type="protein sequence ID" value="ENSCAFP00040013168.1"/>
    <property type="gene ID" value="ENSCAFG00040008101.1"/>
</dbReference>
<dbReference type="Ensembl" id="ENSCAFT00845039859.1">
    <property type="protein sequence ID" value="ENSCAFP00845031217.1"/>
    <property type="gene ID" value="ENSCAFG00845022531.1"/>
</dbReference>
<dbReference type="GeneID" id="607616"/>
<dbReference type="KEGG" id="cfa:607616"/>
<dbReference type="CTD" id="285"/>
<dbReference type="VEuPathDB" id="HostDB:ENSCAFG00845022531"/>
<dbReference type="VGNC" id="VGNC:37855">
    <property type="gene designation" value="ANGPT2"/>
</dbReference>
<dbReference type="eggNOG" id="KOG2579">
    <property type="taxonomic scope" value="Eukaryota"/>
</dbReference>
<dbReference type="GeneTree" id="ENSGT00940000158430"/>
<dbReference type="HOGENOM" id="CLU_038628_3_1_1"/>
<dbReference type="InParanoid" id="A0A8J8"/>
<dbReference type="OMA" id="YYWKGAG"/>
<dbReference type="OrthoDB" id="7735366at2759"/>
<dbReference type="TreeFam" id="TF336658"/>
<dbReference type="Reactome" id="R-CFA-210993">
    <property type="pathway name" value="Tie2 Signaling"/>
</dbReference>
<dbReference type="Proteomes" id="UP000002254">
    <property type="component" value="Chromosome 16"/>
</dbReference>
<dbReference type="Proteomes" id="UP000694429">
    <property type="component" value="Chromosome 16"/>
</dbReference>
<dbReference type="Proteomes" id="UP000694542">
    <property type="component" value="Chromosome 16"/>
</dbReference>
<dbReference type="Proteomes" id="UP000805418">
    <property type="component" value="Chromosome 16"/>
</dbReference>
<dbReference type="Bgee" id="ENSCAFG00000008597">
    <property type="expression patterns" value="Expressed in placenta and 49 other cell types or tissues"/>
</dbReference>
<dbReference type="GO" id="GO:0062023">
    <property type="term" value="C:collagen-containing extracellular matrix"/>
    <property type="evidence" value="ECO:0000318"/>
    <property type="project" value="GO_Central"/>
</dbReference>
<dbReference type="GO" id="GO:0005615">
    <property type="term" value="C:extracellular space"/>
    <property type="evidence" value="ECO:0000318"/>
    <property type="project" value="GO_Central"/>
</dbReference>
<dbReference type="GO" id="GO:0046872">
    <property type="term" value="F:metal ion binding"/>
    <property type="evidence" value="ECO:0007669"/>
    <property type="project" value="UniProtKB-KW"/>
</dbReference>
<dbReference type="GO" id="GO:0048018">
    <property type="term" value="F:receptor ligand activity"/>
    <property type="evidence" value="ECO:0007669"/>
    <property type="project" value="Ensembl"/>
</dbReference>
<dbReference type="GO" id="GO:0030971">
    <property type="term" value="F:receptor tyrosine kinase binding"/>
    <property type="evidence" value="ECO:0000318"/>
    <property type="project" value="GO_Central"/>
</dbReference>
<dbReference type="GO" id="GO:0001525">
    <property type="term" value="P:angiogenesis"/>
    <property type="evidence" value="ECO:0000318"/>
    <property type="project" value="GO_Central"/>
</dbReference>
<dbReference type="GO" id="GO:0007596">
    <property type="term" value="P:blood coagulation"/>
    <property type="evidence" value="ECO:0007669"/>
    <property type="project" value="InterPro"/>
</dbReference>
<dbReference type="GO" id="GO:0030154">
    <property type="term" value="P:cell differentiation"/>
    <property type="evidence" value="ECO:0007669"/>
    <property type="project" value="UniProtKB-KW"/>
</dbReference>
<dbReference type="GO" id="GO:0010467">
    <property type="term" value="P:gene expression"/>
    <property type="evidence" value="ECO:0007669"/>
    <property type="project" value="Ensembl"/>
</dbReference>
<dbReference type="GO" id="GO:0016525">
    <property type="term" value="P:negative regulation of angiogenesis"/>
    <property type="evidence" value="ECO:0007669"/>
    <property type="project" value="Ensembl"/>
</dbReference>
<dbReference type="GO" id="GO:0043537">
    <property type="term" value="P:negative regulation of blood vessel endothelial cell migration"/>
    <property type="evidence" value="ECO:0007669"/>
    <property type="project" value="Ensembl"/>
</dbReference>
<dbReference type="GO" id="GO:0010812">
    <property type="term" value="P:negative regulation of cell-substrate adhesion"/>
    <property type="evidence" value="ECO:0007669"/>
    <property type="project" value="Ensembl"/>
</dbReference>
<dbReference type="GO" id="GO:0050928">
    <property type="term" value="P:negative regulation of positive chemotaxis"/>
    <property type="evidence" value="ECO:0007669"/>
    <property type="project" value="Ensembl"/>
</dbReference>
<dbReference type="GO" id="GO:0050820">
    <property type="term" value="P:positive regulation of coagulation"/>
    <property type="evidence" value="ECO:0007669"/>
    <property type="project" value="Ensembl"/>
</dbReference>
<dbReference type="GO" id="GO:0048014">
    <property type="term" value="P:Tie signaling pathway"/>
    <property type="evidence" value="ECO:0000318"/>
    <property type="project" value="GO_Central"/>
</dbReference>
<dbReference type="CDD" id="cd00087">
    <property type="entry name" value="FReD"/>
    <property type="match status" value="1"/>
</dbReference>
<dbReference type="FunFam" id="4.10.530.10:FF:000001">
    <property type="entry name" value="angiopoietin-2 isoform X1"/>
    <property type="match status" value="1"/>
</dbReference>
<dbReference type="FunFam" id="3.90.215.10:FF:000001">
    <property type="entry name" value="Tenascin isoform 1"/>
    <property type="match status" value="1"/>
</dbReference>
<dbReference type="Gene3D" id="3.90.215.10">
    <property type="entry name" value="Gamma Fibrinogen, chain A, domain 1"/>
    <property type="match status" value="1"/>
</dbReference>
<dbReference type="Gene3D" id="4.10.530.10">
    <property type="entry name" value="Gamma-fibrinogen Carboxyl Terminal Fragment, domain 2"/>
    <property type="match status" value="1"/>
</dbReference>
<dbReference type="InterPro" id="IPR037579">
    <property type="entry name" value="FIB_ANG-like"/>
</dbReference>
<dbReference type="InterPro" id="IPR036056">
    <property type="entry name" value="Fibrinogen-like_C"/>
</dbReference>
<dbReference type="InterPro" id="IPR014716">
    <property type="entry name" value="Fibrinogen_a/b/g_C_1"/>
</dbReference>
<dbReference type="InterPro" id="IPR002181">
    <property type="entry name" value="Fibrinogen_a/b/g_C_dom"/>
</dbReference>
<dbReference type="InterPro" id="IPR020837">
    <property type="entry name" value="Fibrinogen_CS"/>
</dbReference>
<dbReference type="NCBIfam" id="NF040941">
    <property type="entry name" value="GGGWT_bact"/>
    <property type="match status" value="1"/>
</dbReference>
<dbReference type="PANTHER" id="PTHR47221">
    <property type="entry name" value="FIBRINOGEN ALPHA CHAIN"/>
    <property type="match status" value="1"/>
</dbReference>
<dbReference type="PANTHER" id="PTHR47221:SF6">
    <property type="entry name" value="FIBRINOGEN ALPHA CHAIN"/>
    <property type="match status" value="1"/>
</dbReference>
<dbReference type="Pfam" id="PF25443">
    <property type="entry name" value="ANG-1"/>
    <property type="match status" value="1"/>
</dbReference>
<dbReference type="Pfam" id="PF00147">
    <property type="entry name" value="Fibrinogen_C"/>
    <property type="match status" value="1"/>
</dbReference>
<dbReference type="SMART" id="SM00186">
    <property type="entry name" value="FBG"/>
    <property type="match status" value="1"/>
</dbReference>
<dbReference type="SUPFAM" id="SSF56496">
    <property type="entry name" value="Fibrinogen C-terminal domain-like"/>
    <property type="match status" value="1"/>
</dbReference>
<dbReference type="PROSITE" id="PS00514">
    <property type="entry name" value="FIBRINOGEN_C_1"/>
    <property type="match status" value="1"/>
</dbReference>
<dbReference type="PROSITE" id="PS51406">
    <property type="entry name" value="FIBRINOGEN_C_2"/>
    <property type="match status" value="1"/>
</dbReference>
<name>ANGP2_CANLF</name>
<gene>
    <name type="primary">ANGPT2</name>
</gene>